<evidence type="ECO:0000255" key="1">
    <source>
        <dbReference type="HAMAP-Rule" id="MF_00181"/>
    </source>
</evidence>
<dbReference type="EC" id="3.4.11.1" evidence="1"/>
<dbReference type="EC" id="3.4.11.10" evidence="1"/>
<dbReference type="EMBL" id="CP001227">
    <property type="protein sequence ID" value="ACR47486.1"/>
    <property type="molecule type" value="Genomic_DNA"/>
</dbReference>
<dbReference type="RefSeq" id="WP_012736721.1">
    <property type="nucleotide sequence ID" value="NC_012730.1"/>
</dbReference>
<dbReference type="SMR" id="C4K1N6"/>
<dbReference type="MEROPS" id="M17.003"/>
<dbReference type="KEGG" id="rpk:RPR_03940"/>
<dbReference type="HOGENOM" id="CLU_013734_6_0_5"/>
<dbReference type="Proteomes" id="UP000005015">
    <property type="component" value="Chromosome"/>
</dbReference>
<dbReference type="GO" id="GO:0005737">
    <property type="term" value="C:cytoplasm"/>
    <property type="evidence" value="ECO:0007669"/>
    <property type="project" value="UniProtKB-SubCell"/>
</dbReference>
<dbReference type="GO" id="GO:0030145">
    <property type="term" value="F:manganese ion binding"/>
    <property type="evidence" value="ECO:0007669"/>
    <property type="project" value="UniProtKB-UniRule"/>
</dbReference>
<dbReference type="GO" id="GO:0070006">
    <property type="term" value="F:metalloaminopeptidase activity"/>
    <property type="evidence" value="ECO:0007669"/>
    <property type="project" value="InterPro"/>
</dbReference>
<dbReference type="GO" id="GO:0006508">
    <property type="term" value="P:proteolysis"/>
    <property type="evidence" value="ECO:0007669"/>
    <property type="project" value="UniProtKB-KW"/>
</dbReference>
<dbReference type="CDD" id="cd00433">
    <property type="entry name" value="Peptidase_M17"/>
    <property type="match status" value="1"/>
</dbReference>
<dbReference type="Gene3D" id="3.40.220.10">
    <property type="entry name" value="Leucine Aminopeptidase, subunit E, domain 1"/>
    <property type="match status" value="1"/>
</dbReference>
<dbReference type="Gene3D" id="3.40.630.10">
    <property type="entry name" value="Zn peptidases"/>
    <property type="match status" value="1"/>
</dbReference>
<dbReference type="HAMAP" id="MF_00181">
    <property type="entry name" value="Cytosol_peptidase_M17"/>
    <property type="match status" value="1"/>
</dbReference>
<dbReference type="InterPro" id="IPR011356">
    <property type="entry name" value="Leucine_aapep/pepB"/>
</dbReference>
<dbReference type="InterPro" id="IPR043472">
    <property type="entry name" value="Macro_dom-like"/>
</dbReference>
<dbReference type="InterPro" id="IPR000819">
    <property type="entry name" value="Peptidase_M17_C"/>
</dbReference>
<dbReference type="InterPro" id="IPR023042">
    <property type="entry name" value="Peptidase_M17_leu_NH2_pept"/>
</dbReference>
<dbReference type="InterPro" id="IPR008283">
    <property type="entry name" value="Peptidase_M17_N"/>
</dbReference>
<dbReference type="NCBIfam" id="NF002073">
    <property type="entry name" value="PRK00913.1-2"/>
    <property type="match status" value="1"/>
</dbReference>
<dbReference type="NCBIfam" id="NF002074">
    <property type="entry name" value="PRK00913.1-4"/>
    <property type="match status" value="1"/>
</dbReference>
<dbReference type="NCBIfam" id="NF002075">
    <property type="entry name" value="PRK00913.2-2"/>
    <property type="match status" value="1"/>
</dbReference>
<dbReference type="NCBIfam" id="NF002077">
    <property type="entry name" value="PRK00913.2-4"/>
    <property type="match status" value="1"/>
</dbReference>
<dbReference type="PANTHER" id="PTHR11963:SF23">
    <property type="entry name" value="CYTOSOL AMINOPEPTIDASE"/>
    <property type="match status" value="1"/>
</dbReference>
<dbReference type="PANTHER" id="PTHR11963">
    <property type="entry name" value="LEUCINE AMINOPEPTIDASE-RELATED"/>
    <property type="match status" value="1"/>
</dbReference>
<dbReference type="Pfam" id="PF00883">
    <property type="entry name" value="Peptidase_M17"/>
    <property type="match status" value="1"/>
</dbReference>
<dbReference type="Pfam" id="PF02789">
    <property type="entry name" value="Peptidase_M17_N"/>
    <property type="match status" value="1"/>
</dbReference>
<dbReference type="PRINTS" id="PR00481">
    <property type="entry name" value="LAMNOPPTDASE"/>
</dbReference>
<dbReference type="SUPFAM" id="SSF52949">
    <property type="entry name" value="Macro domain-like"/>
    <property type="match status" value="1"/>
</dbReference>
<dbReference type="SUPFAM" id="SSF53187">
    <property type="entry name" value="Zn-dependent exopeptidases"/>
    <property type="match status" value="1"/>
</dbReference>
<dbReference type="PROSITE" id="PS00631">
    <property type="entry name" value="CYTOSOL_AP"/>
    <property type="match status" value="1"/>
</dbReference>
<protein>
    <recommendedName>
        <fullName evidence="1">Probable cytosol aminopeptidase</fullName>
        <ecNumber evidence="1">3.4.11.1</ecNumber>
    </recommendedName>
    <alternativeName>
        <fullName evidence="1">Leucine aminopeptidase</fullName>
        <shortName evidence="1">LAP</shortName>
        <ecNumber evidence="1">3.4.11.10</ecNumber>
    </alternativeName>
    <alternativeName>
        <fullName evidence="1">Leucyl aminopeptidase</fullName>
    </alternativeName>
</protein>
<proteinExistence type="inferred from homology"/>
<gene>
    <name evidence="1" type="primary">pepA</name>
    <name type="ordered locus">RPR_03940</name>
</gene>
<name>AMPA_RICPU</name>
<keyword id="KW-0031">Aminopeptidase</keyword>
<keyword id="KW-0963">Cytoplasm</keyword>
<keyword id="KW-0378">Hydrolase</keyword>
<keyword id="KW-0464">Manganese</keyword>
<keyword id="KW-0479">Metal-binding</keyword>
<keyword id="KW-0645">Protease</keyword>
<sequence>MLNVNFVNEESSTNQGLVVFIDEQLKLDSNLIGLDQQHHGLISKTIQNKLQFTGKYGQIKVIPSVIKSGEVRYLIIAGLGNEEKLTEAKIEELGGKILQHATGCKISTIGLKLTNRISRFTSQTFASLVASGAFLASYRFDKYRTTLKEAEKFAVESIEIFTDNSTETAKLFEIKKLIAEAVFFTRDISNEPSNIKTPQVYAERIVDRLEPLGVDVDVIGEREMKNLGMGALLGVGQGSQNESKLVVMEYKGGSKDAPTIALVGKGVIFDTGGISLKPSSDMHLMRYDMGGSAAVVGTIIAVAGQKLSVNIVGVVGLVENMPSGNAQRPGDVVTTMSGQTAEVLNTDAEGRLVLADAVWYAQEKFKPKCVIDVATLTGAITIALGNTYAGCFSNNDELADKLIKVGEEVNEKLWRMPLHDEYDAMINSDIADMANIGNVPRAAGSCIAAHFIKRFIKDGVDWAHLDIAGVANSNKASALGPKGAVGYGVRLLEQFIKEYT</sequence>
<reference key="1">
    <citation type="journal article" date="2009" name="PLoS ONE">
        <title>Genome sequence of the endosymbiont Rickettsia peacockii and comparison with virulent Rickettsia rickettsii: identification of virulence factors.</title>
        <authorList>
            <person name="Felsheim R.F."/>
            <person name="Kurtti T.J."/>
            <person name="Munderloh U.G."/>
        </authorList>
    </citation>
    <scope>NUCLEOTIDE SEQUENCE [LARGE SCALE GENOMIC DNA]</scope>
    <source>
        <strain>Rustic</strain>
    </source>
</reference>
<organism>
    <name type="scientific">Rickettsia peacockii (strain Rustic)</name>
    <dbReference type="NCBI Taxonomy" id="562019"/>
    <lineage>
        <taxon>Bacteria</taxon>
        <taxon>Pseudomonadati</taxon>
        <taxon>Pseudomonadota</taxon>
        <taxon>Alphaproteobacteria</taxon>
        <taxon>Rickettsiales</taxon>
        <taxon>Rickettsiaceae</taxon>
        <taxon>Rickettsieae</taxon>
        <taxon>Rickettsia</taxon>
        <taxon>spotted fever group</taxon>
    </lineage>
</organism>
<comment type="function">
    <text evidence="1">Presumably involved in the processing and regular turnover of intracellular proteins. Catalyzes the removal of unsubstituted N-terminal amino acids from various peptides.</text>
</comment>
<comment type="catalytic activity">
    <reaction evidence="1">
        <text>Release of an N-terminal amino acid, Xaa-|-Yaa-, in which Xaa is preferably Leu, but may be other amino acids including Pro although not Arg or Lys, and Yaa may be Pro. Amino acid amides and methyl esters are also readily hydrolyzed, but rates on arylamides are exceedingly low.</text>
        <dbReference type="EC" id="3.4.11.1"/>
    </reaction>
</comment>
<comment type="catalytic activity">
    <reaction evidence="1">
        <text>Release of an N-terminal amino acid, preferentially leucine, but not glutamic or aspartic acids.</text>
        <dbReference type="EC" id="3.4.11.10"/>
    </reaction>
</comment>
<comment type="cofactor">
    <cofactor evidence="1">
        <name>Mn(2+)</name>
        <dbReference type="ChEBI" id="CHEBI:29035"/>
    </cofactor>
    <text evidence="1">Binds 2 manganese ions per subunit.</text>
</comment>
<comment type="subcellular location">
    <subcellularLocation>
        <location evidence="1">Cytoplasm</location>
    </subcellularLocation>
</comment>
<comment type="similarity">
    <text evidence="1">Belongs to the peptidase M17 family.</text>
</comment>
<feature type="chain" id="PRO_1000203840" description="Probable cytosol aminopeptidase">
    <location>
        <begin position="1"/>
        <end position="500"/>
    </location>
</feature>
<feature type="active site" evidence="1">
    <location>
        <position position="277"/>
    </location>
</feature>
<feature type="active site" evidence="1">
    <location>
        <position position="351"/>
    </location>
</feature>
<feature type="binding site" evidence="1">
    <location>
        <position position="265"/>
    </location>
    <ligand>
        <name>Mn(2+)</name>
        <dbReference type="ChEBI" id="CHEBI:29035"/>
        <label>2</label>
    </ligand>
</feature>
<feature type="binding site" evidence="1">
    <location>
        <position position="270"/>
    </location>
    <ligand>
        <name>Mn(2+)</name>
        <dbReference type="ChEBI" id="CHEBI:29035"/>
        <label>1</label>
    </ligand>
</feature>
<feature type="binding site" evidence="1">
    <location>
        <position position="270"/>
    </location>
    <ligand>
        <name>Mn(2+)</name>
        <dbReference type="ChEBI" id="CHEBI:29035"/>
        <label>2</label>
    </ligand>
</feature>
<feature type="binding site" evidence="1">
    <location>
        <position position="288"/>
    </location>
    <ligand>
        <name>Mn(2+)</name>
        <dbReference type="ChEBI" id="CHEBI:29035"/>
        <label>2</label>
    </ligand>
</feature>
<feature type="binding site" evidence="1">
    <location>
        <position position="347"/>
    </location>
    <ligand>
        <name>Mn(2+)</name>
        <dbReference type="ChEBI" id="CHEBI:29035"/>
        <label>1</label>
    </ligand>
</feature>
<feature type="binding site" evidence="1">
    <location>
        <position position="349"/>
    </location>
    <ligand>
        <name>Mn(2+)</name>
        <dbReference type="ChEBI" id="CHEBI:29035"/>
        <label>1</label>
    </ligand>
</feature>
<feature type="binding site" evidence="1">
    <location>
        <position position="349"/>
    </location>
    <ligand>
        <name>Mn(2+)</name>
        <dbReference type="ChEBI" id="CHEBI:29035"/>
        <label>2</label>
    </ligand>
</feature>
<accession>C4K1N6</accession>